<protein>
    <recommendedName>
        <fullName>Basic phospholipase A2 CTs-G6</fullName>
        <shortName>svPLA2</shortName>
        <ecNumber>3.1.1.4</ecNumber>
    </recommendedName>
    <alternativeName>
        <fullName>Phosphatidylcholine 2-acylhydrolase</fullName>
    </alternativeName>
</protein>
<reference key="1">
    <citation type="journal article" date="2004" name="Biochem. J.">
        <title>Venom phospholipases A2 of bamboo viper (Trimeresurus stejnegeri): molecular characterization, geographic variations and evidence of multiple ancestries.</title>
        <authorList>
            <person name="Tsai I.-H."/>
            <person name="Wang Y.-M."/>
            <person name="Chen Y.-H."/>
            <person name="Tsai T.-S."/>
            <person name="Tu M.-C."/>
        </authorList>
    </citation>
    <scope>PROTEIN SEQUENCE</scope>
    <scope>FUNCTION</scope>
    <scope>MASS SPECTROMETRY</scope>
    <source>
        <strain>Chinese</strain>
        <tissue>Venom</tissue>
    </source>
</reference>
<proteinExistence type="evidence at protein level"/>
<name>PA2BA_TRIST</name>
<sequence length="23" mass="2510">NLVQLGKMIFQETGKNPATSYGL</sequence>
<comment type="function">
    <text evidence="4">Snake venom phospholipase A2 (PLA2) that induces local edema a few hours after injection (5-10 ug) in the hind paw. PLA2 catalyzes the calcium-dependent hydrolysis of the 2-acyl groups in 3-sn-phosphoglycerides.</text>
</comment>
<comment type="catalytic activity">
    <reaction evidence="2 3">
        <text>a 1,2-diacyl-sn-glycero-3-phosphocholine + H2O = a 1-acyl-sn-glycero-3-phosphocholine + a fatty acid + H(+)</text>
        <dbReference type="Rhea" id="RHEA:15801"/>
        <dbReference type="ChEBI" id="CHEBI:15377"/>
        <dbReference type="ChEBI" id="CHEBI:15378"/>
        <dbReference type="ChEBI" id="CHEBI:28868"/>
        <dbReference type="ChEBI" id="CHEBI:57643"/>
        <dbReference type="ChEBI" id="CHEBI:58168"/>
        <dbReference type="EC" id="3.1.1.4"/>
    </reaction>
</comment>
<comment type="cofactor">
    <cofactor evidence="1">
        <name>Ca(2+)</name>
        <dbReference type="ChEBI" id="CHEBI:29108"/>
    </cofactor>
    <text evidence="1">Binds 1 Ca(2+) ion.</text>
</comment>
<comment type="subcellular location">
    <subcellularLocation>
        <location>Secreted</location>
    </subcellularLocation>
</comment>
<comment type="tissue specificity">
    <text>Expressed by the venom gland.</text>
</comment>
<comment type="PTM">
    <text evidence="1">Contains 7 disulfide bonds.</text>
</comment>
<comment type="mass spectrometry" mass="13758.0" method="Electrospray" evidence="4"/>
<comment type="similarity">
    <text evidence="5">Belongs to the phospholipase A2 family. Group II subfamily.</text>
</comment>
<evidence type="ECO:0000250" key="1"/>
<evidence type="ECO:0000255" key="2">
    <source>
        <dbReference type="PROSITE-ProRule" id="PRU10035"/>
    </source>
</evidence>
<evidence type="ECO:0000255" key="3">
    <source>
        <dbReference type="PROSITE-ProRule" id="PRU10036"/>
    </source>
</evidence>
<evidence type="ECO:0000269" key="4">
    <source>
    </source>
</evidence>
<evidence type="ECO:0000305" key="5"/>
<dbReference type="EC" id="3.1.1.4"/>
<dbReference type="GO" id="GO:0005576">
    <property type="term" value="C:extracellular region"/>
    <property type="evidence" value="ECO:0007669"/>
    <property type="project" value="UniProtKB-SubCell"/>
</dbReference>
<dbReference type="GO" id="GO:0046872">
    <property type="term" value="F:metal ion binding"/>
    <property type="evidence" value="ECO:0007669"/>
    <property type="project" value="UniProtKB-KW"/>
</dbReference>
<dbReference type="GO" id="GO:0004623">
    <property type="term" value="F:phospholipase A2 activity"/>
    <property type="evidence" value="ECO:0007669"/>
    <property type="project" value="UniProtKB-EC"/>
</dbReference>
<dbReference type="GO" id="GO:0090729">
    <property type="term" value="F:toxin activity"/>
    <property type="evidence" value="ECO:0007669"/>
    <property type="project" value="UniProtKB-KW"/>
</dbReference>
<dbReference type="GO" id="GO:0016042">
    <property type="term" value="P:lipid catabolic process"/>
    <property type="evidence" value="ECO:0007669"/>
    <property type="project" value="UniProtKB-KW"/>
</dbReference>
<keyword id="KW-0106">Calcium</keyword>
<keyword id="KW-0903">Direct protein sequencing</keyword>
<keyword id="KW-1015">Disulfide bond</keyword>
<keyword id="KW-0378">Hydrolase</keyword>
<keyword id="KW-0442">Lipid degradation</keyword>
<keyword id="KW-0443">Lipid metabolism</keyword>
<keyword id="KW-0479">Metal-binding</keyword>
<keyword id="KW-0964">Secreted</keyword>
<keyword id="KW-0800">Toxin</keyword>
<feature type="chain" id="PRO_0000419074" description="Basic phospholipase A2 CTs-G6">
    <location>
        <begin position="1"/>
        <end position="23" status="greater than"/>
    </location>
</feature>
<feature type="non-terminal residue">
    <location>
        <position position="23"/>
    </location>
</feature>
<accession>P0DJQ0</accession>
<organism>
    <name type="scientific">Trimeresurus stejnegeri</name>
    <name type="common">Chinese green tree viper</name>
    <name type="synonym">Viridovipera stejnegeri</name>
    <dbReference type="NCBI Taxonomy" id="39682"/>
    <lineage>
        <taxon>Eukaryota</taxon>
        <taxon>Metazoa</taxon>
        <taxon>Chordata</taxon>
        <taxon>Craniata</taxon>
        <taxon>Vertebrata</taxon>
        <taxon>Euteleostomi</taxon>
        <taxon>Lepidosauria</taxon>
        <taxon>Squamata</taxon>
        <taxon>Bifurcata</taxon>
        <taxon>Unidentata</taxon>
        <taxon>Episquamata</taxon>
        <taxon>Toxicofera</taxon>
        <taxon>Serpentes</taxon>
        <taxon>Colubroidea</taxon>
        <taxon>Viperidae</taxon>
        <taxon>Crotalinae</taxon>
        <taxon>Trimeresurus</taxon>
    </lineage>
</organism>